<proteinExistence type="evidence at protein level"/>
<dbReference type="EMBL" id="AB019230">
    <property type="protein sequence ID" value="BAB02719.1"/>
    <property type="molecule type" value="Genomic_DNA"/>
</dbReference>
<dbReference type="EMBL" id="CP002686">
    <property type="protein sequence ID" value="AEE76031.1"/>
    <property type="molecule type" value="Genomic_DNA"/>
</dbReference>
<dbReference type="EMBL" id="BT021979">
    <property type="protein sequence ID" value="AAY17416.1"/>
    <property type="molecule type" value="mRNA"/>
</dbReference>
<dbReference type="EMBL" id="BT030626">
    <property type="protein sequence ID" value="ABR46206.1"/>
    <property type="molecule type" value="mRNA"/>
</dbReference>
<dbReference type="RefSeq" id="NP_188425.2">
    <property type="nucleotide sequence ID" value="NM_112679.4"/>
</dbReference>
<dbReference type="PDB" id="4V29">
    <property type="method" value="X-ray"/>
    <property type="resolution" value="1.60 A"/>
    <property type="chains" value="A/B=1-177"/>
</dbReference>
<dbReference type="PDB" id="5A4X">
    <property type="method" value="X-ray"/>
    <property type="resolution" value="2.20 A"/>
    <property type="chains" value="A/B=1-177"/>
</dbReference>
<dbReference type="PDB" id="5A50">
    <property type="method" value="X-ray"/>
    <property type="resolution" value="2.40 A"/>
    <property type="chains" value="A/B=1-177"/>
</dbReference>
<dbReference type="PDB" id="5A51">
    <property type="method" value="X-ray"/>
    <property type="resolution" value="1.60 A"/>
    <property type="chains" value="A/B=1-177"/>
</dbReference>
<dbReference type="PDBsum" id="4V29"/>
<dbReference type="PDBsum" id="5A4X"/>
<dbReference type="PDBsum" id="5A50"/>
<dbReference type="PDBsum" id="5A51"/>
<dbReference type="SMR" id="Q9LVH4"/>
<dbReference type="FunCoup" id="Q9LVH4">
    <property type="interactions" value="23"/>
</dbReference>
<dbReference type="STRING" id="3702.Q9LVH4"/>
<dbReference type="PaxDb" id="3702-AT3G17980.1"/>
<dbReference type="ProteomicsDB" id="240594"/>
<dbReference type="EnsemblPlants" id="AT3G17980.1">
    <property type="protein sequence ID" value="AT3G17980.1"/>
    <property type="gene ID" value="AT3G17980"/>
</dbReference>
<dbReference type="GeneID" id="821323"/>
<dbReference type="Gramene" id="AT3G17980.1">
    <property type="protein sequence ID" value="AT3G17980.1"/>
    <property type="gene ID" value="AT3G17980"/>
</dbReference>
<dbReference type="KEGG" id="ath:AT3G17980"/>
<dbReference type="Araport" id="AT3G17980"/>
<dbReference type="TAIR" id="AT3G17980">
    <property type="gene designation" value="C2"/>
</dbReference>
<dbReference type="eggNOG" id="KOG1030">
    <property type="taxonomic scope" value="Eukaryota"/>
</dbReference>
<dbReference type="HOGENOM" id="CLU_106037_0_0_1"/>
<dbReference type="InParanoid" id="Q9LVH4"/>
<dbReference type="OMA" id="CAESHIM"/>
<dbReference type="OrthoDB" id="73919at2759"/>
<dbReference type="PhylomeDB" id="Q9LVH4"/>
<dbReference type="EvolutionaryTrace" id="Q9LVH4"/>
<dbReference type="PRO" id="PR:Q9LVH4"/>
<dbReference type="Proteomes" id="UP000006548">
    <property type="component" value="Chromosome 3"/>
</dbReference>
<dbReference type="ExpressionAtlas" id="Q9LVH4">
    <property type="expression patterns" value="baseline and differential"/>
</dbReference>
<dbReference type="GO" id="GO:0005829">
    <property type="term" value="C:cytosol"/>
    <property type="evidence" value="ECO:0000314"/>
    <property type="project" value="UniProtKB"/>
</dbReference>
<dbReference type="GO" id="GO:0005634">
    <property type="term" value="C:nucleus"/>
    <property type="evidence" value="ECO:0000314"/>
    <property type="project" value="UniProtKB"/>
</dbReference>
<dbReference type="GO" id="GO:0005886">
    <property type="term" value="C:plasma membrane"/>
    <property type="evidence" value="ECO:0000314"/>
    <property type="project" value="UniProtKB"/>
</dbReference>
<dbReference type="GO" id="GO:0005509">
    <property type="term" value="F:calcium ion binding"/>
    <property type="evidence" value="ECO:0000314"/>
    <property type="project" value="UniProtKB"/>
</dbReference>
<dbReference type="GO" id="GO:0005096">
    <property type="term" value="F:GTPase activator activity"/>
    <property type="evidence" value="ECO:0000250"/>
    <property type="project" value="UniProtKB"/>
</dbReference>
<dbReference type="GO" id="GO:0008289">
    <property type="term" value="F:lipid binding"/>
    <property type="evidence" value="ECO:0000314"/>
    <property type="project" value="UniProtKB"/>
</dbReference>
<dbReference type="GO" id="GO:0005543">
    <property type="term" value="F:phospholipid binding"/>
    <property type="evidence" value="ECO:0000315"/>
    <property type="project" value="UniProtKB"/>
</dbReference>
<dbReference type="GO" id="GO:0042803">
    <property type="term" value="F:protein homodimerization activity"/>
    <property type="evidence" value="ECO:0000314"/>
    <property type="project" value="UniProtKB"/>
</dbReference>
<dbReference type="GO" id="GO:0009738">
    <property type="term" value="P:abscisic acid-activated signaling pathway"/>
    <property type="evidence" value="ECO:0007669"/>
    <property type="project" value="UniProtKB-KW"/>
</dbReference>
<dbReference type="GO" id="GO:0006952">
    <property type="term" value="P:defense response"/>
    <property type="evidence" value="ECO:0007669"/>
    <property type="project" value="UniProtKB-KW"/>
</dbReference>
<dbReference type="GO" id="GO:0009789">
    <property type="term" value="P:positive regulation of abscisic acid-activated signaling pathway"/>
    <property type="evidence" value="ECO:0000315"/>
    <property type="project" value="UniProtKB"/>
</dbReference>
<dbReference type="GO" id="GO:1900426">
    <property type="term" value="P:positive regulation of defense response to bacterium"/>
    <property type="evidence" value="ECO:0000250"/>
    <property type="project" value="UniProtKB"/>
</dbReference>
<dbReference type="GO" id="GO:1901002">
    <property type="term" value="P:positive regulation of response to salt stress"/>
    <property type="evidence" value="ECO:0000315"/>
    <property type="project" value="UniProtKB"/>
</dbReference>
<dbReference type="GO" id="GO:0009651">
    <property type="term" value="P:response to salt stress"/>
    <property type="evidence" value="ECO:0000314"/>
    <property type="project" value="UniProtKB"/>
</dbReference>
<dbReference type="CDD" id="cd04038">
    <property type="entry name" value="C2_ArfGAP"/>
    <property type="match status" value="1"/>
</dbReference>
<dbReference type="Gene3D" id="2.60.40.150">
    <property type="entry name" value="C2 domain"/>
    <property type="match status" value="1"/>
</dbReference>
<dbReference type="InterPro" id="IPR000008">
    <property type="entry name" value="C2_dom"/>
</dbReference>
<dbReference type="InterPro" id="IPR035892">
    <property type="entry name" value="C2_domain_sf"/>
</dbReference>
<dbReference type="InterPro" id="IPR044562">
    <property type="entry name" value="CAR1-11"/>
</dbReference>
<dbReference type="PANTHER" id="PTHR45933">
    <property type="entry name" value="PROTEIN C2-DOMAIN ABA-RELATED 4"/>
    <property type="match status" value="1"/>
</dbReference>
<dbReference type="PANTHER" id="PTHR45933:SF5">
    <property type="entry name" value="PROTEIN C2-DOMAIN ABA-RELATED 4"/>
    <property type="match status" value="1"/>
</dbReference>
<dbReference type="Pfam" id="PF00168">
    <property type="entry name" value="C2"/>
    <property type="match status" value="1"/>
</dbReference>
<dbReference type="SMART" id="SM00239">
    <property type="entry name" value="C2"/>
    <property type="match status" value="1"/>
</dbReference>
<dbReference type="SUPFAM" id="SSF49562">
    <property type="entry name" value="C2 domain (Calcium/lipid-binding domain, CaLB)"/>
    <property type="match status" value="1"/>
</dbReference>
<dbReference type="PROSITE" id="PS50004">
    <property type="entry name" value="C2"/>
    <property type="match status" value="1"/>
</dbReference>
<gene>
    <name evidence="7" type="primary">CAR4</name>
    <name type="synonym">C2</name>
    <name evidence="6" type="synonym">GAP1</name>
    <name evidence="9" type="ordered locus">At3g17980</name>
    <name evidence="10" type="ORF">MEB5.18</name>
</gene>
<accession>Q9LVH4</accession>
<protein>
    <recommendedName>
        <fullName evidence="7">Protein C2-DOMAIN ABA-RELATED 4</fullName>
    </recommendedName>
    <alternativeName>
        <fullName>C2 domain-containing protein</fullName>
        <shortName>AtC2</shortName>
    </alternativeName>
    <alternativeName>
        <fullName evidence="6">GTPase activating protein 1</fullName>
        <shortName evidence="6">AtGAP1</shortName>
    </alternativeName>
</protein>
<name>CAR4_ARATH</name>
<organism>
    <name type="scientific">Arabidopsis thaliana</name>
    <name type="common">Mouse-ear cress</name>
    <dbReference type="NCBI Taxonomy" id="3702"/>
    <lineage>
        <taxon>Eukaryota</taxon>
        <taxon>Viridiplantae</taxon>
        <taxon>Streptophyta</taxon>
        <taxon>Embryophyta</taxon>
        <taxon>Tracheophyta</taxon>
        <taxon>Spermatophyta</taxon>
        <taxon>Magnoliopsida</taxon>
        <taxon>eudicotyledons</taxon>
        <taxon>Gunneridae</taxon>
        <taxon>Pentapetalae</taxon>
        <taxon>rosids</taxon>
        <taxon>malvids</taxon>
        <taxon>Brassicales</taxon>
        <taxon>Brassicaceae</taxon>
        <taxon>Camelineae</taxon>
        <taxon>Arabidopsis</taxon>
    </lineage>
</organism>
<evidence type="ECO:0000250" key="1">
    <source>
        <dbReference type="UniProtKB" id="Q6YWF1"/>
    </source>
</evidence>
<evidence type="ECO:0000255" key="2">
    <source>
        <dbReference type="PROSITE-ProRule" id="PRU00041"/>
    </source>
</evidence>
<evidence type="ECO:0000269" key="3">
    <source>
    </source>
</evidence>
<evidence type="ECO:0000269" key="4">
    <source>
    </source>
</evidence>
<evidence type="ECO:0000269" key="5">
    <source>
    </source>
</evidence>
<evidence type="ECO:0000303" key="6">
    <source>
    </source>
</evidence>
<evidence type="ECO:0000303" key="7">
    <source>
    </source>
</evidence>
<evidence type="ECO:0000305" key="8">
    <source>
    </source>
</evidence>
<evidence type="ECO:0000312" key="9">
    <source>
        <dbReference type="Araport" id="AT3G17980"/>
    </source>
</evidence>
<evidence type="ECO:0000312" key="10">
    <source>
        <dbReference type="EMBL" id="BAB02719.1"/>
    </source>
</evidence>
<evidence type="ECO:0007744" key="11">
    <source>
        <dbReference type="PDB" id="4V29"/>
    </source>
</evidence>
<evidence type="ECO:0007829" key="12">
    <source>
        <dbReference type="PDB" id="4V29"/>
    </source>
</evidence>
<evidence type="ECO:0007829" key="13">
    <source>
        <dbReference type="PDB" id="5A4X"/>
    </source>
</evidence>
<keyword id="KW-0002">3D-structure</keyword>
<keyword id="KW-0938">Abscisic acid signaling pathway</keyword>
<keyword id="KW-0106">Calcium</keyword>
<keyword id="KW-1003">Cell membrane</keyword>
<keyword id="KW-0963">Cytoplasm</keyword>
<keyword id="KW-0343">GTPase activation</keyword>
<keyword id="KW-0446">Lipid-binding</keyword>
<keyword id="KW-0472">Membrane</keyword>
<keyword id="KW-0479">Metal-binding</keyword>
<keyword id="KW-0539">Nucleus</keyword>
<keyword id="KW-0611">Plant defense</keyword>
<keyword id="KW-1185">Reference proteome</keyword>
<feature type="chain" id="PRO_0000433314" description="Protein C2-DOMAIN ABA-RELATED 4">
    <location>
        <begin position="1"/>
        <end position="177"/>
    </location>
</feature>
<feature type="domain" description="C2" evidence="2">
    <location>
        <begin position="4"/>
        <end position="118"/>
    </location>
</feature>
<feature type="binding site" evidence="4 11">
    <location>
        <position position="33"/>
    </location>
    <ligand>
        <name>Ca(2+)</name>
        <dbReference type="ChEBI" id="CHEBI:29108"/>
        <label>1</label>
    </ligand>
</feature>
<feature type="binding site" evidence="4 11">
    <location>
        <position position="34"/>
    </location>
    <ligand>
        <name>Ca(2+)</name>
        <dbReference type="ChEBI" id="CHEBI:29108"/>
        <label>1</label>
    </ligand>
</feature>
<feature type="binding site" evidence="4 11">
    <location>
        <position position="34"/>
    </location>
    <ligand>
        <name>Ca(2+)</name>
        <dbReference type="ChEBI" id="CHEBI:29108"/>
        <label>2</label>
    </ligand>
</feature>
<feature type="binding site" evidence="4 11">
    <location>
        <position position="39"/>
    </location>
    <ligand>
        <name>Ca(2+)</name>
        <dbReference type="ChEBI" id="CHEBI:29108"/>
        <label>2</label>
    </ligand>
</feature>
<feature type="binding site" evidence="4 11">
    <location>
        <position position="85"/>
    </location>
    <ligand>
        <name>Ca(2+)</name>
        <dbReference type="ChEBI" id="CHEBI:29108"/>
        <label>1</label>
    </ligand>
</feature>
<feature type="binding site" evidence="4 11">
    <location>
        <position position="85"/>
    </location>
    <ligand>
        <name>Ca(2+)</name>
        <dbReference type="ChEBI" id="CHEBI:29108"/>
        <label>2</label>
    </ligand>
</feature>
<feature type="binding site" evidence="4 11">
    <location>
        <position position="86"/>
    </location>
    <ligand>
        <name>Ca(2+)</name>
        <dbReference type="ChEBI" id="CHEBI:29108"/>
        <label>2</label>
    </ligand>
</feature>
<feature type="binding site" evidence="4 11">
    <location>
        <position position="87"/>
    </location>
    <ligand>
        <name>Ca(2+)</name>
        <dbReference type="ChEBI" id="CHEBI:29108"/>
        <label>1</label>
    </ligand>
</feature>
<feature type="binding site" evidence="4 11">
    <location>
        <position position="87"/>
    </location>
    <ligand>
        <name>Ca(2+)</name>
        <dbReference type="ChEBI" id="CHEBI:29108"/>
        <label>2</label>
    </ligand>
</feature>
<feature type="binding site" evidence="4 11">
    <location>
        <position position="93"/>
    </location>
    <ligand>
        <name>Ca(2+)</name>
        <dbReference type="ChEBI" id="CHEBI:29108"/>
        <label>1</label>
    </ligand>
</feature>
<feature type="mutagenesis site" description="Small reduction in the ability to bind liposomes in the absence of free Ca(2+); when associated with A-52." evidence="5">
    <original>K</original>
    <variation>A</variation>
    <location>
        <position position="50"/>
    </location>
</feature>
<feature type="mutagenesis site" description="Small reduction in the ability to bind liposomes in the absence of free Ca(2+); when associated with A-50." evidence="5">
    <original>K</original>
    <variation>A</variation>
    <location>
        <position position="52"/>
    </location>
</feature>
<feature type="mutagenesis site" description="Impaired Ca(2+)-dependent phospholipids binding and reduced abscisic acid (ABA) sensitivity, as well as altered membrane localization and PYR1 binding; when associated with A-87." evidence="4 5">
    <original>D</original>
    <variation>A</variation>
    <location>
        <position position="85"/>
    </location>
</feature>
<feature type="mutagenesis site" description="Impaired Ca(2+)-dependent phospholipids binding and reduced abscisic acid (ABA) sensitivity, as well as altered membrane localization and PYR1 binding; when associated with A-85." evidence="4 5">
    <original>D</original>
    <variation>A</variation>
    <location>
        <position position="87"/>
    </location>
</feature>
<feature type="strand" evidence="12">
    <location>
        <begin position="18"/>
        <end position="29"/>
    </location>
</feature>
<feature type="strand" evidence="12">
    <location>
        <begin position="34"/>
        <end position="36"/>
    </location>
</feature>
<feature type="strand" evidence="12">
    <location>
        <begin position="40"/>
        <end position="46"/>
    </location>
</feature>
<feature type="strand" evidence="12">
    <location>
        <begin position="49"/>
        <end position="52"/>
    </location>
</feature>
<feature type="strand" evidence="12">
    <location>
        <begin position="66"/>
        <end position="73"/>
    </location>
</feature>
<feature type="strand" evidence="12">
    <location>
        <begin position="78"/>
        <end position="85"/>
    </location>
</feature>
<feature type="strand" evidence="13">
    <location>
        <begin position="88"/>
        <end position="90"/>
    </location>
</feature>
<feature type="strand" evidence="12">
    <location>
        <begin position="93"/>
        <end position="102"/>
    </location>
</feature>
<feature type="helix" evidence="12">
    <location>
        <begin position="103"/>
        <end position="109"/>
    </location>
</feature>
<feature type="strand" evidence="12">
    <location>
        <begin position="120"/>
        <end position="125"/>
    </location>
</feature>
<feature type="strand" evidence="12">
    <location>
        <begin position="129"/>
        <end position="131"/>
    </location>
</feature>
<feature type="strand" evidence="12">
    <location>
        <begin position="133"/>
        <end position="135"/>
    </location>
</feature>
<feature type="strand" evidence="12">
    <location>
        <begin position="137"/>
        <end position="142"/>
    </location>
</feature>
<feature type="strand" evidence="12">
    <location>
        <begin position="145"/>
        <end position="153"/>
    </location>
</feature>
<feature type="strand" evidence="12">
    <location>
        <begin position="155"/>
        <end position="159"/>
    </location>
</feature>
<feature type="strand" evidence="12">
    <location>
        <begin position="161"/>
        <end position="169"/>
    </location>
</feature>
<feature type="strand" evidence="13">
    <location>
        <begin position="172"/>
        <end position="174"/>
    </location>
</feature>
<sequence>MTTACPARTSSLMDDLLGLLRIRIKRGVNLAVRDISSSDPYVVVKMGKQKLKTRVINKDVNPEWNEDLTLSVTDSNLTVLLTVYDHDMFSKDDKMGDAEFEIKPYIEALRMQLDGLPSGTIVTTVKPSRRNCLAEESRVTWVDGKLVQDLVLRLRHVECGEVEAQLQWIDLPGSKGL</sequence>
<comment type="function">
    <text evidence="1 3 4 5">Mediates the transient calcium-dependent interaction of PYR/PYL/RCAR abscisic acid (ABA) receptors with the plasma membrane and thus regulates ABA sensitivity (PubMed:25465408, PubMed:26719420). Stimulates the GTPase/ATPase activities of YchF1, and regulates its subcellular localization. Promotes tolerance towards salinity stress by limiting the accumulation of reactive oxygen species (ROS) (PubMed:23550829). Promotes resistance to bacterial pathogens (e.g. Xanthomonas oryzae pv. oryzae and P.syringae pv. tomato DC3000) (By similarity). Binds liposomes in the absence of exogenous Ca(2+), but this activity is enhanced in the presence of Ca(2+) and generates membrane curvature (PubMed:26719420).</text>
</comment>
<comment type="cofactor">
    <cofactor evidence="2">
        <name>Ca(2+)</name>
        <dbReference type="ChEBI" id="CHEBI:29108"/>
    </cofactor>
</comment>
<comment type="subunit">
    <text evidence="3 4 5">Dimers and oligomers (PubMed:26719420). Binds to PYR/PYL/RCAR abscisic acid intracellular receptors in an ABA-independent manner, both at the plasma membrane and in the nucleus (PubMed:25465408, PubMed:26719420). Interacts directly with PYR1, PYL1, PYL4, PYL6 and PYL8 (PubMed:25465408, PubMed:26719420). Binds phospholipids in a Ca(2+)-dependent manner (PubMed:25465408). Interacts with YchF1 (PubMed:23550829).</text>
</comment>
<comment type="subcellular location">
    <subcellularLocation>
        <location evidence="4 5">Cell membrane</location>
    </subcellularLocation>
    <subcellularLocation>
        <location evidence="4">Nucleus</location>
    </subcellularLocation>
    <subcellularLocation>
        <location evidence="3 5">Cytoplasm</location>
        <location evidence="3 5">Cytosol</location>
    </subcellularLocation>
    <text evidence="3">Localized mainly in the cytosol under NaCl treatment, but translocates to the plasma membrane upon wounding.</text>
</comment>
<comment type="disruption phenotype">
    <text evidence="4">When associated with disruption in CAR1, CAR5 and CAR9 genes, reduced sensitivity to abscisic acid (ABA) during seedling establishment and root growth regulation.</text>
</comment>
<comment type="similarity">
    <text evidence="8">Belongs to the plant CAR protein family.</text>
</comment>
<reference key="1">
    <citation type="journal article" date="2000" name="DNA Res.">
        <title>Structural analysis of Arabidopsis thaliana chromosome 3. I. Sequence features of the regions of 4,504,864 bp covered by sixty P1 and TAC clones.</title>
        <authorList>
            <person name="Sato S."/>
            <person name="Nakamura Y."/>
            <person name="Kaneko T."/>
            <person name="Katoh T."/>
            <person name="Asamizu E."/>
            <person name="Tabata S."/>
        </authorList>
    </citation>
    <scope>NUCLEOTIDE SEQUENCE [LARGE SCALE GENOMIC DNA]</scope>
    <source>
        <strain>cv. Columbia</strain>
    </source>
</reference>
<reference key="2">
    <citation type="journal article" date="2017" name="Plant J.">
        <title>Araport11: a complete reannotation of the Arabidopsis thaliana reference genome.</title>
        <authorList>
            <person name="Cheng C.Y."/>
            <person name="Krishnakumar V."/>
            <person name="Chan A.P."/>
            <person name="Thibaud-Nissen F."/>
            <person name="Schobel S."/>
            <person name="Town C.D."/>
        </authorList>
    </citation>
    <scope>GENOME REANNOTATION</scope>
    <source>
        <strain>cv. Columbia</strain>
    </source>
</reference>
<reference key="3">
    <citation type="submission" date="2005-04" db="EMBL/GenBank/DDBJ databases">
        <title>Arabidopsis cDNA clones.</title>
        <authorList>
            <person name="Shinn P."/>
            <person name="Chen H."/>
            <person name="Cheuk R.F."/>
            <person name="Kim C.J."/>
            <person name="Ecker J.R."/>
        </authorList>
    </citation>
    <scope>NUCLEOTIDE SEQUENCE [LARGE SCALE MRNA]</scope>
    <source>
        <strain>cv. Columbia</strain>
    </source>
</reference>
<reference key="4">
    <citation type="journal article" date="2013" name="Plant Cell Environ.">
        <title>The unconventional P-loop NTPase OsYchF1 and its regulator OsGAP1 play opposite roles in salinity stress tolerance.</title>
        <authorList>
            <person name="Cheung M.-Y."/>
            <person name="Li M.-W."/>
            <person name="Yung Y.-L."/>
            <person name="Wen C.-Q."/>
            <person name="Lam H.-M."/>
        </authorList>
    </citation>
    <scope>FUNCTION</scope>
    <scope>SUBCELLULAR LOCATION</scope>
    <scope>INTERACTION WITH YCHF1</scope>
    <source>
        <strain>cv. Col-2</strain>
        <strain>cv. Columbia</strain>
    </source>
</reference>
<reference key="5">
    <citation type="journal article" date="2016" name="Proc. Natl. Acad. Sci. U.S.A.">
        <title>Calcium-dependent oligomerization of CAR proteins at cell membrane modulates ABA signaling.</title>
        <authorList>
            <person name="Diaz M."/>
            <person name="Sanchez-Barrena M.J."/>
            <person name="Gonzalez-Rubio J.M."/>
            <person name="Rodriguez L."/>
            <person name="Fernandez D."/>
            <person name="Antoni R."/>
            <person name="Yunta C."/>
            <person name="Belda-Palazon B."/>
            <person name="Gonzalez-Guzman M."/>
            <person name="Peirats-Llobet M."/>
            <person name="Menendez M."/>
            <person name="Boskovic J."/>
            <person name="Marquez J.A."/>
            <person name="Rodriguez P.L."/>
            <person name="Albert A."/>
        </authorList>
    </citation>
    <scope>FUNCTION</scope>
    <scope>MUTAGENESIS OF LYS-50; LYS-52; ASP-85 AND ASP-87</scope>
    <scope>SUBCELLULAR LOCATION</scope>
    <scope>SUBUNIT</scope>
    <scope>INTERACTION WITH PYR1</scope>
    <source>
        <strain>cv. Columbia</strain>
    </source>
</reference>
<reference key="6">
    <citation type="journal article" date="2011" name="Acta Crystallogr. F">
        <title>Crystallization and preliminary crystallographic analysis of a C2 protein from Arabidopsis thaliana.</title>
        <authorList>
            <person name="Diaz M."/>
            <person name="Rodriguez L."/>
            <person name="Gonzalez-Guzman M."/>
            <person name="Martinez-Ripoll M."/>
            <person name="Albert A."/>
        </authorList>
    </citation>
    <scope>X-RAY CRYSTALLOGRAPHY (1.60 ANGSTROMS)</scope>
</reference>
<reference key="7">
    <citation type="journal article" date="2014" name="Plant Cell">
        <title>C2-domain abscisic acid-related proteins mediate the interaction of PYR/PYL/RCAR abscisic acid receptors with the plasma membrane and regulate abscisic acid sensitivity in Arabidopsis.</title>
        <authorList>
            <person name="Rodriguez L."/>
            <person name="Gonzalez-Guzman M."/>
            <person name="Diaz M."/>
            <person name="Rodrigues A."/>
            <person name="Izquierdo-Garcia A.C."/>
            <person name="Peirats-Llobet M."/>
            <person name="Fernandez M.A."/>
            <person name="Antoni R."/>
            <person name="Fernandez D."/>
            <person name="Marquez J.A."/>
            <person name="Mulet J.M."/>
            <person name="Albert A."/>
            <person name="Rodriguez P.L."/>
        </authorList>
    </citation>
    <scope>X-RAY CRYSTALLOGRAPHY (1.60 ANGSTROMS) IN COMPLEX WITH CALCIUM</scope>
    <scope>FUNCTION</scope>
    <scope>DISRUPTION PHENOTYPE</scope>
    <scope>MUTAGENESIS OF ASP-85 AND ASP-87</scope>
    <scope>SUBCELLULAR LOCATION</scope>
    <scope>INTERACTION WITH PYR1; PYL1; PYL4; PYL6 AND PYL8</scope>
    <scope>GENE FAMILY</scope>
    <scope>NOMENCLATURE</scope>
</reference>